<proteinExistence type="evidence at transcript level"/>
<organism>
    <name type="scientific">Prorocentrum minimum</name>
    <name type="common">Dinoflagellate</name>
    <name type="synonym">Exuviaella minima</name>
    <dbReference type="NCBI Taxonomy" id="39449"/>
    <lineage>
        <taxon>Eukaryota</taxon>
        <taxon>Sar</taxon>
        <taxon>Alveolata</taxon>
        <taxon>Dinophyceae</taxon>
        <taxon>Prorocentrales</taxon>
        <taxon>Prorocentraceae</taxon>
        <taxon>Prorocentrum</taxon>
    </lineage>
</organism>
<name>CALM_PROMN</name>
<feature type="initiator methionine" description="Removed" evidence="1">
    <location>
        <position position="1"/>
    </location>
</feature>
<feature type="chain" id="PRO_0000334497" description="Calmodulin">
    <location>
        <begin position="2"/>
        <end position="149"/>
    </location>
</feature>
<feature type="domain" description="EF-hand 1" evidence="2">
    <location>
        <begin position="8"/>
        <end position="43"/>
    </location>
</feature>
<feature type="domain" description="EF-hand 2" evidence="2">
    <location>
        <begin position="44"/>
        <end position="79"/>
    </location>
</feature>
<feature type="domain" description="EF-hand 3" evidence="2">
    <location>
        <begin position="81"/>
        <end position="116"/>
    </location>
</feature>
<feature type="domain" description="EF-hand 4" evidence="2">
    <location>
        <begin position="117"/>
        <end position="149"/>
    </location>
</feature>
<feature type="binding site" evidence="2">
    <location>
        <position position="21"/>
    </location>
    <ligand>
        <name>Ca(2+)</name>
        <dbReference type="ChEBI" id="CHEBI:29108"/>
        <label>1</label>
    </ligand>
</feature>
<feature type="binding site" evidence="2">
    <location>
        <position position="23"/>
    </location>
    <ligand>
        <name>Ca(2+)</name>
        <dbReference type="ChEBI" id="CHEBI:29108"/>
        <label>1</label>
    </ligand>
</feature>
<feature type="binding site" evidence="2">
    <location>
        <position position="25"/>
    </location>
    <ligand>
        <name>Ca(2+)</name>
        <dbReference type="ChEBI" id="CHEBI:29108"/>
        <label>1</label>
    </ligand>
</feature>
<feature type="binding site" evidence="2">
    <location>
        <position position="27"/>
    </location>
    <ligand>
        <name>Ca(2+)</name>
        <dbReference type="ChEBI" id="CHEBI:29108"/>
        <label>1</label>
    </ligand>
</feature>
<feature type="binding site" evidence="2">
    <location>
        <position position="32"/>
    </location>
    <ligand>
        <name>Ca(2+)</name>
        <dbReference type="ChEBI" id="CHEBI:29108"/>
        <label>1</label>
    </ligand>
</feature>
<feature type="binding site" evidence="2">
    <location>
        <position position="57"/>
    </location>
    <ligand>
        <name>Ca(2+)</name>
        <dbReference type="ChEBI" id="CHEBI:29108"/>
        <label>2</label>
    </ligand>
</feature>
<feature type="binding site" evidence="2">
    <location>
        <position position="59"/>
    </location>
    <ligand>
        <name>Ca(2+)</name>
        <dbReference type="ChEBI" id="CHEBI:29108"/>
        <label>2</label>
    </ligand>
</feature>
<feature type="binding site" evidence="2">
    <location>
        <position position="61"/>
    </location>
    <ligand>
        <name>Ca(2+)</name>
        <dbReference type="ChEBI" id="CHEBI:29108"/>
        <label>2</label>
    </ligand>
</feature>
<feature type="binding site" evidence="2">
    <location>
        <position position="63"/>
    </location>
    <ligand>
        <name>Ca(2+)</name>
        <dbReference type="ChEBI" id="CHEBI:29108"/>
        <label>2</label>
    </ligand>
</feature>
<feature type="binding site" evidence="2">
    <location>
        <position position="68"/>
    </location>
    <ligand>
        <name>Ca(2+)</name>
        <dbReference type="ChEBI" id="CHEBI:29108"/>
        <label>2</label>
    </ligand>
</feature>
<feature type="binding site" evidence="2">
    <location>
        <position position="94"/>
    </location>
    <ligand>
        <name>Ca(2+)</name>
        <dbReference type="ChEBI" id="CHEBI:29108"/>
        <label>3</label>
    </ligand>
</feature>
<feature type="binding site" evidence="2">
    <location>
        <position position="96"/>
    </location>
    <ligand>
        <name>Ca(2+)</name>
        <dbReference type="ChEBI" id="CHEBI:29108"/>
        <label>3</label>
    </ligand>
</feature>
<feature type="binding site" evidence="2">
    <location>
        <position position="98"/>
    </location>
    <ligand>
        <name>Ca(2+)</name>
        <dbReference type="ChEBI" id="CHEBI:29108"/>
        <label>3</label>
    </ligand>
</feature>
<feature type="binding site" evidence="2">
    <location>
        <position position="105"/>
    </location>
    <ligand>
        <name>Ca(2+)</name>
        <dbReference type="ChEBI" id="CHEBI:29108"/>
        <label>3</label>
    </ligand>
</feature>
<feature type="binding site" evidence="2">
    <location>
        <position position="130"/>
    </location>
    <ligand>
        <name>Ca(2+)</name>
        <dbReference type="ChEBI" id="CHEBI:29108"/>
        <label>4</label>
    </ligand>
</feature>
<feature type="binding site" evidence="2">
    <location>
        <position position="132"/>
    </location>
    <ligand>
        <name>Ca(2+)</name>
        <dbReference type="ChEBI" id="CHEBI:29108"/>
        <label>4</label>
    </ligand>
</feature>
<feature type="binding site" evidence="2">
    <location>
        <position position="134"/>
    </location>
    <ligand>
        <name>Ca(2+)</name>
        <dbReference type="ChEBI" id="CHEBI:29108"/>
        <label>4</label>
    </ligand>
</feature>
<feature type="binding site" evidence="2">
    <location>
        <position position="136"/>
    </location>
    <ligand>
        <name>Ca(2+)</name>
        <dbReference type="ChEBI" id="CHEBI:29108"/>
        <label>4</label>
    </ligand>
</feature>
<feature type="binding site" evidence="2">
    <location>
        <position position="141"/>
    </location>
    <ligand>
        <name>Ca(2+)</name>
        <dbReference type="ChEBI" id="CHEBI:29108"/>
        <label>4</label>
    </ligand>
</feature>
<feature type="modified residue" description="N-acetylalanine" evidence="1">
    <location>
        <position position="2"/>
    </location>
</feature>
<feature type="modified residue" description="N6,N6,N6-trimethyllysine" evidence="1">
    <location>
        <position position="116"/>
    </location>
</feature>
<protein>
    <recommendedName>
        <fullName>Calmodulin</fullName>
        <shortName>CaM</shortName>
    </recommendedName>
</protein>
<dbReference type="EMBL" id="DQ884428">
    <property type="protein sequence ID" value="ABI14414.1"/>
    <property type="molecule type" value="mRNA"/>
</dbReference>
<dbReference type="EMBL" id="DQ884429">
    <property type="protein sequence ID" value="ABI14415.1"/>
    <property type="molecule type" value="mRNA"/>
</dbReference>
<dbReference type="EMBL" id="DQ884430">
    <property type="protein sequence ID" value="ABI14416.1"/>
    <property type="molecule type" value="mRNA"/>
</dbReference>
<dbReference type="EMBL" id="DQ884431">
    <property type="protein sequence ID" value="ABI14417.1"/>
    <property type="molecule type" value="mRNA"/>
</dbReference>
<dbReference type="SMR" id="A3E4D8"/>
<dbReference type="GO" id="GO:0016460">
    <property type="term" value="C:myosin II complex"/>
    <property type="evidence" value="ECO:0007669"/>
    <property type="project" value="TreeGrafter"/>
</dbReference>
<dbReference type="GO" id="GO:0005509">
    <property type="term" value="F:calcium ion binding"/>
    <property type="evidence" value="ECO:0007669"/>
    <property type="project" value="InterPro"/>
</dbReference>
<dbReference type="CDD" id="cd00051">
    <property type="entry name" value="EFh"/>
    <property type="match status" value="2"/>
</dbReference>
<dbReference type="FunFam" id="1.10.238.10:FF:000034">
    <property type="entry name" value="Calmodulin"/>
    <property type="match status" value="1"/>
</dbReference>
<dbReference type="FunFam" id="1.10.238.10:FF:000042">
    <property type="entry name" value="Calmodulin"/>
    <property type="match status" value="1"/>
</dbReference>
<dbReference type="Gene3D" id="1.10.238.10">
    <property type="entry name" value="EF-hand"/>
    <property type="match status" value="3"/>
</dbReference>
<dbReference type="InterPro" id="IPR050230">
    <property type="entry name" value="CALM/Myosin/TropC-like"/>
</dbReference>
<dbReference type="InterPro" id="IPR011992">
    <property type="entry name" value="EF-hand-dom_pair"/>
</dbReference>
<dbReference type="InterPro" id="IPR018247">
    <property type="entry name" value="EF_Hand_1_Ca_BS"/>
</dbReference>
<dbReference type="InterPro" id="IPR002048">
    <property type="entry name" value="EF_hand_dom"/>
</dbReference>
<dbReference type="PANTHER" id="PTHR23048:SF0">
    <property type="entry name" value="CALMODULIN LIKE 3"/>
    <property type="match status" value="1"/>
</dbReference>
<dbReference type="PANTHER" id="PTHR23048">
    <property type="entry name" value="MYOSIN LIGHT CHAIN 1, 3"/>
    <property type="match status" value="1"/>
</dbReference>
<dbReference type="Pfam" id="PF13499">
    <property type="entry name" value="EF-hand_7"/>
    <property type="match status" value="2"/>
</dbReference>
<dbReference type="SMART" id="SM00054">
    <property type="entry name" value="EFh"/>
    <property type="match status" value="4"/>
</dbReference>
<dbReference type="SMART" id="SM01184">
    <property type="entry name" value="efhand_Ca_insen"/>
    <property type="match status" value="1"/>
</dbReference>
<dbReference type="SUPFAM" id="SSF47473">
    <property type="entry name" value="EF-hand"/>
    <property type="match status" value="1"/>
</dbReference>
<dbReference type="PROSITE" id="PS00018">
    <property type="entry name" value="EF_HAND_1"/>
    <property type="match status" value="4"/>
</dbReference>
<dbReference type="PROSITE" id="PS50222">
    <property type="entry name" value="EF_HAND_2"/>
    <property type="match status" value="4"/>
</dbReference>
<evidence type="ECO:0000250" key="1"/>
<evidence type="ECO:0000255" key="2">
    <source>
        <dbReference type="PROSITE-ProRule" id="PRU00448"/>
    </source>
</evidence>
<evidence type="ECO:0000305" key="3"/>
<sequence>MADQLTEEQIAEFKEAFSLFDKDGDGTITTKELGTVMRSLGQNPTEAELQDMINEVDADGNGTIDFPEFLSLMARKMKDTDTEEELIEAFKVFDRDGNGFISAAELRHVMTNLGEKLTDEEVDEMIREADVDGDGQINYEEFVKMMMAK</sequence>
<reference key="1">
    <citation type="journal article" date="2007" name="Proc. Natl. Acad. Sci. U.S.A.">
        <title>Spliced leader RNA trans-splicing in dinoflagellates.</title>
        <authorList>
            <person name="Zhang H."/>
            <person name="Hou Y."/>
            <person name="Miranda L."/>
            <person name="Campbell D.A."/>
            <person name="Sturm N.R."/>
            <person name="Gaasterland T."/>
            <person name="Lin S."/>
        </authorList>
    </citation>
    <scope>NUCLEOTIDE SEQUENCE [MRNA]</scope>
</reference>
<comment type="function">
    <text>Calmodulin mediates the control of a large number of enzymes, ion channels and other proteins by Ca(2+). Among the enzymes to be stimulated by the calmodulin-Ca(2+) complex are a number of protein kinases and phosphatases.</text>
</comment>
<comment type="miscellaneous">
    <text>This protein has four functional calcium-binding sites.</text>
</comment>
<comment type="similarity">
    <text evidence="3">Belongs to the calmodulin family.</text>
</comment>
<accession>A3E4D8</accession>
<keyword id="KW-0007">Acetylation</keyword>
<keyword id="KW-0106">Calcium</keyword>
<keyword id="KW-0479">Metal-binding</keyword>
<keyword id="KW-0488">Methylation</keyword>
<keyword id="KW-0677">Repeat</keyword>